<protein>
    <recommendedName>
        <fullName evidence="1">Protein-L-isoaspartate O-methyltransferase</fullName>
        <ecNumber evidence="1">2.1.1.77</ecNumber>
    </recommendedName>
    <alternativeName>
        <fullName evidence="1">L-isoaspartyl protein carboxyl methyltransferase</fullName>
    </alternativeName>
    <alternativeName>
        <fullName evidence="1">Protein L-isoaspartyl methyltransferase</fullName>
    </alternativeName>
    <alternativeName>
        <fullName evidence="1">Protein-beta-aspartate methyltransferase</fullName>
        <shortName evidence="1">PIMT</shortName>
    </alternativeName>
</protein>
<dbReference type="EC" id="2.1.1.77" evidence="1"/>
<dbReference type="EMBL" id="CP001110">
    <property type="protein sequence ID" value="ACF44770.1"/>
    <property type="molecule type" value="Genomic_DNA"/>
</dbReference>
<dbReference type="RefSeq" id="WP_012509243.1">
    <property type="nucleotide sequence ID" value="NC_011060.1"/>
</dbReference>
<dbReference type="SMR" id="B4SFU3"/>
<dbReference type="STRING" id="324925.Ppha_2609"/>
<dbReference type="KEGG" id="pph:Ppha_2609"/>
<dbReference type="eggNOG" id="COG2518">
    <property type="taxonomic scope" value="Bacteria"/>
</dbReference>
<dbReference type="HOGENOM" id="CLU_055432_2_0_10"/>
<dbReference type="OrthoDB" id="9810066at2"/>
<dbReference type="Proteomes" id="UP000002724">
    <property type="component" value="Chromosome"/>
</dbReference>
<dbReference type="GO" id="GO:0005737">
    <property type="term" value="C:cytoplasm"/>
    <property type="evidence" value="ECO:0007669"/>
    <property type="project" value="UniProtKB-SubCell"/>
</dbReference>
<dbReference type="GO" id="GO:0004719">
    <property type="term" value="F:protein-L-isoaspartate (D-aspartate) O-methyltransferase activity"/>
    <property type="evidence" value="ECO:0007669"/>
    <property type="project" value="UniProtKB-UniRule"/>
</dbReference>
<dbReference type="GO" id="GO:0032259">
    <property type="term" value="P:methylation"/>
    <property type="evidence" value="ECO:0007669"/>
    <property type="project" value="UniProtKB-KW"/>
</dbReference>
<dbReference type="GO" id="GO:0036211">
    <property type="term" value="P:protein modification process"/>
    <property type="evidence" value="ECO:0007669"/>
    <property type="project" value="UniProtKB-UniRule"/>
</dbReference>
<dbReference type="GO" id="GO:0030091">
    <property type="term" value="P:protein repair"/>
    <property type="evidence" value="ECO:0007669"/>
    <property type="project" value="UniProtKB-UniRule"/>
</dbReference>
<dbReference type="CDD" id="cd02440">
    <property type="entry name" value="AdoMet_MTases"/>
    <property type="match status" value="1"/>
</dbReference>
<dbReference type="FunFam" id="3.40.50.150:FF:000010">
    <property type="entry name" value="Protein-L-isoaspartate O-methyltransferase"/>
    <property type="match status" value="1"/>
</dbReference>
<dbReference type="Gene3D" id="3.40.50.150">
    <property type="entry name" value="Vaccinia Virus protein VP39"/>
    <property type="match status" value="1"/>
</dbReference>
<dbReference type="HAMAP" id="MF_00090">
    <property type="entry name" value="PIMT"/>
    <property type="match status" value="1"/>
</dbReference>
<dbReference type="InterPro" id="IPR000682">
    <property type="entry name" value="PCMT"/>
</dbReference>
<dbReference type="InterPro" id="IPR029063">
    <property type="entry name" value="SAM-dependent_MTases_sf"/>
</dbReference>
<dbReference type="NCBIfam" id="TIGR00080">
    <property type="entry name" value="pimt"/>
    <property type="match status" value="1"/>
</dbReference>
<dbReference type="NCBIfam" id="NF001453">
    <property type="entry name" value="PRK00312.1"/>
    <property type="match status" value="1"/>
</dbReference>
<dbReference type="PANTHER" id="PTHR11579">
    <property type="entry name" value="PROTEIN-L-ISOASPARTATE O-METHYLTRANSFERASE"/>
    <property type="match status" value="1"/>
</dbReference>
<dbReference type="PANTHER" id="PTHR11579:SF0">
    <property type="entry name" value="PROTEIN-L-ISOASPARTATE(D-ASPARTATE) O-METHYLTRANSFERASE"/>
    <property type="match status" value="1"/>
</dbReference>
<dbReference type="Pfam" id="PF01135">
    <property type="entry name" value="PCMT"/>
    <property type="match status" value="1"/>
</dbReference>
<dbReference type="SUPFAM" id="SSF53335">
    <property type="entry name" value="S-adenosyl-L-methionine-dependent methyltransferases"/>
    <property type="match status" value="1"/>
</dbReference>
<dbReference type="PROSITE" id="PS01279">
    <property type="entry name" value="PCMT"/>
    <property type="match status" value="1"/>
</dbReference>
<proteinExistence type="inferred from homology"/>
<keyword id="KW-0963">Cytoplasm</keyword>
<keyword id="KW-0489">Methyltransferase</keyword>
<keyword id="KW-1185">Reference proteome</keyword>
<keyword id="KW-0949">S-adenosyl-L-methionine</keyword>
<keyword id="KW-0808">Transferase</keyword>
<comment type="function">
    <text evidence="1">Catalyzes the methyl esterification of L-isoaspartyl residues in peptides and proteins that result from spontaneous decomposition of normal L-aspartyl and L-asparaginyl residues. It plays a role in the repair and/or degradation of damaged proteins.</text>
</comment>
<comment type="catalytic activity">
    <reaction evidence="1">
        <text>[protein]-L-isoaspartate + S-adenosyl-L-methionine = [protein]-L-isoaspartate alpha-methyl ester + S-adenosyl-L-homocysteine</text>
        <dbReference type="Rhea" id="RHEA:12705"/>
        <dbReference type="Rhea" id="RHEA-COMP:12143"/>
        <dbReference type="Rhea" id="RHEA-COMP:12144"/>
        <dbReference type="ChEBI" id="CHEBI:57856"/>
        <dbReference type="ChEBI" id="CHEBI:59789"/>
        <dbReference type="ChEBI" id="CHEBI:90596"/>
        <dbReference type="ChEBI" id="CHEBI:90598"/>
        <dbReference type="EC" id="2.1.1.77"/>
    </reaction>
</comment>
<comment type="subcellular location">
    <subcellularLocation>
        <location evidence="1">Cytoplasm</location>
    </subcellularLocation>
</comment>
<comment type="similarity">
    <text evidence="1">Belongs to the methyltransferase superfamily. L-isoaspartyl/D-aspartyl protein methyltransferase family.</text>
</comment>
<feature type="chain" id="PRO_1000093263" description="Protein-L-isoaspartate O-methyltransferase">
    <location>
        <begin position="1"/>
        <end position="220"/>
    </location>
</feature>
<feature type="active site" evidence="1">
    <location>
        <position position="65"/>
    </location>
</feature>
<name>PIMT_PELPB</name>
<accession>B4SFU3</accession>
<gene>
    <name evidence="1" type="primary">pcm</name>
    <name type="ordered locus">Ppha_2609</name>
</gene>
<sequence>MQEGKKLLDFRRREMVETLKRYGITNQRVLKAFLEVPRHLFFEVEAWDAAYNDGAYPVGFGQTISQPYTVAFMTSLLVERSPSGKVLEIGTGSGYQAAILDALGYSVFSVERIVALYERAQQRFSRLGLHIACRFGDGTLGWKDEAPFDGIVVTAGAPKAPESLLQQLAENGCMIIPVGGSDAQQMTVIKREEGEFKRELFERFVFVPLVGREGWDDTVF</sequence>
<reference key="1">
    <citation type="submission" date="2008-06" db="EMBL/GenBank/DDBJ databases">
        <title>Complete sequence of Pelodictyon phaeoclathratiforme BU-1.</title>
        <authorList>
            <consortium name="US DOE Joint Genome Institute"/>
            <person name="Lucas S."/>
            <person name="Copeland A."/>
            <person name="Lapidus A."/>
            <person name="Glavina del Rio T."/>
            <person name="Dalin E."/>
            <person name="Tice H."/>
            <person name="Bruce D."/>
            <person name="Goodwin L."/>
            <person name="Pitluck S."/>
            <person name="Schmutz J."/>
            <person name="Larimer F."/>
            <person name="Land M."/>
            <person name="Hauser L."/>
            <person name="Kyrpides N."/>
            <person name="Mikhailova N."/>
            <person name="Liu Z."/>
            <person name="Li T."/>
            <person name="Zhao F."/>
            <person name="Overmann J."/>
            <person name="Bryant D.A."/>
            <person name="Richardson P."/>
        </authorList>
    </citation>
    <scope>NUCLEOTIDE SEQUENCE [LARGE SCALE GENOMIC DNA]</scope>
    <source>
        <strain>DSM 5477 / BU-1</strain>
    </source>
</reference>
<evidence type="ECO:0000255" key="1">
    <source>
        <dbReference type="HAMAP-Rule" id="MF_00090"/>
    </source>
</evidence>
<organism>
    <name type="scientific">Pelodictyon phaeoclathratiforme (strain DSM 5477 / BU-1)</name>
    <dbReference type="NCBI Taxonomy" id="324925"/>
    <lineage>
        <taxon>Bacteria</taxon>
        <taxon>Pseudomonadati</taxon>
        <taxon>Chlorobiota</taxon>
        <taxon>Chlorobiia</taxon>
        <taxon>Chlorobiales</taxon>
        <taxon>Chlorobiaceae</taxon>
        <taxon>Chlorobium/Pelodictyon group</taxon>
        <taxon>Pelodictyon</taxon>
    </lineage>
</organism>